<gene>
    <name type="ordered locus">Maqu_2464</name>
</gene>
<evidence type="ECO:0000255" key="1">
    <source>
        <dbReference type="HAMAP-Rule" id="MF_00048"/>
    </source>
</evidence>
<dbReference type="EMBL" id="CP000514">
    <property type="protein sequence ID" value="ABM19539.1"/>
    <property type="molecule type" value="Genomic_DNA"/>
</dbReference>
<dbReference type="RefSeq" id="WP_011785923.1">
    <property type="nucleotide sequence ID" value="NC_008740.1"/>
</dbReference>
<dbReference type="SMR" id="A1U3H0"/>
<dbReference type="STRING" id="351348.Maqu_2464"/>
<dbReference type="KEGG" id="maq:Maqu_2464"/>
<dbReference type="eggNOG" id="COG0792">
    <property type="taxonomic scope" value="Bacteria"/>
</dbReference>
<dbReference type="HOGENOM" id="CLU_115353_1_1_6"/>
<dbReference type="OrthoDB" id="9794876at2"/>
<dbReference type="Proteomes" id="UP000000998">
    <property type="component" value="Chromosome"/>
</dbReference>
<dbReference type="GO" id="GO:0003676">
    <property type="term" value="F:nucleic acid binding"/>
    <property type="evidence" value="ECO:0007669"/>
    <property type="project" value="InterPro"/>
</dbReference>
<dbReference type="Gene3D" id="3.40.1350.10">
    <property type="match status" value="1"/>
</dbReference>
<dbReference type="HAMAP" id="MF_00048">
    <property type="entry name" value="UPF0102"/>
    <property type="match status" value="1"/>
</dbReference>
<dbReference type="InterPro" id="IPR011335">
    <property type="entry name" value="Restrct_endonuc-II-like"/>
</dbReference>
<dbReference type="InterPro" id="IPR011856">
    <property type="entry name" value="tRNA_endonuc-like_dom_sf"/>
</dbReference>
<dbReference type="InterPro" id="IPR003509">
    <property type="entry name" value="UPF0102_YraN-like"/>
</dbReference>
<dbReference type="NCBIfam" id="NF009150">
    <property type="entry name" value="PRK12497.1-3"/>
    <property type="match status" value="1"/>
</dbReference>
<dbReference type="NCBIfam" id="TIGR00252">
    <property type="entry name" value="YraN family protein"/>
    <property type="match status" value="1"/>
</dbReference>
<dbReference type="PANTHER" id="PTHR34039">
    <property type="entry name" value="UPF0102 PROTEIN YRAN"/>
    <property type="match status" value="1"/>
</dbReference>
<dbReference type="PANTHER" id="PTHR34039:SF1">
    <property type="entry name" value="UPF0102 PROTEIN YRAN"/>
    <property type="match status" value="1"/>
</dbReference>
<dbReference type="Pfam" id="PF02021">
    <property type="entry name" value="UPF0102"/>
    <property type="match status" value="1"/>
</dbReference>
<dbReference type="SUPFAM" id="SSF52980">
    <property type="entry name" value="Restriction endonuclease-like"/>
    <property type="match status" value="1"/>
</dbReference>
<comment type="similarity">
    <text evidence="1">Belongs to the UPF0102 family.</text>
</comment>
<feature type="chain" id="PRO_0000336200" description="UPF0102 protein Maqu_2464">
    <location>
        <begin position="1"/>
        <end position="123"/>
    </location>
</feature>
<sequence>MAREGSRKLGQHYEGVAARYLESKGIRIIERNVHNRGGEIDLIGMDAEALVFFEVRFRADGALVDPISSVSAVKQQRLVRAASFYLHRHGLWDRVSRIDVIGITPGHSSKYRIQWIKNAIQAD</sequence>
<name>Y2464_MARN8</name>
<accession>A1U3H0</accession>
<reference key="1">
    <citation type="journal article" date="2011" name="Appl. Environ. Microbiol.">
        <title>Genomic potential of Marinobacter aquaeolei, a biogeochemical 'opportunitroph'.</title>
        <authorList>
            <person name="Singer E."/>
            <person name="Webb E.A."/>
            <person name="Nelson W.C."/>
            <person name="Heidelberg J.F."/>
            <person name="Ivanova N."/>
            <person name="Pati A."/>
            <person name="Edwards K.J."/>
        </authorList>
    </citation>
    <scope>NUCLEOTIDE SEQUENCE [LARGE SCALE GENOMIC DNA]</scope>
    <source>
        <strain>ATCC 700491 / DSM 11845 / VT8</strain>
    </source>
</reference>
<organism>
    <name type="scientific">Marinobacter nauticus (strain ATCC 700491 / DSM 11845 / VT8)</name>
    <name type="common">Marinobacter aquaeolei</name>
    <dbReference type="NCBI Taxonomy" id="351348"/>
    <lineage>
        <taxon>Bacteria</taxon>
        <taxon>Pseudomonadati</taxon>
        <taxon>Pseudomonadota</taxon>
        <taxon>Gammaproteobacteria</taxon>
        <taxon>Pseudomonadales</taxon>
        <taxon>Marinobacteraceae</taxon>
        <taxon>Marinobacter</taxon>
    </lineage>
</organism>
<proteinExistence type="inferred from homology"/>
<protein>
    <recommendedName>
        <fullName evidence="1">UPF0102 protein Maqu_2464</fullName>
    </recommendedName>
</protein>